<reference key="1">
    <citation type="journal article" date="2002" name="Nat. Genet.">
        <title>Genome sequence of the endocellular obligate symbiont of tsetse flies, Wigglesworthia glossinidia.</title>
        <authorList>
            <person name="Akman L."/>
            <person name="Yamashita A."/>
            <person name="Watanabe H."/>
            <person name="Oshima K."/>
            <person name="Shiba T."/>
            <person name="Hattori M."/>
            <person name="Aksoy S."/>
        </authorList>
    </citation>
    <scope>NUCLEOTIDE SEQUENCE [LARGE SCALE GENOMIC DNA]</scope>
</reference>
<dbReference type="EC" id="3.1.13.-" evidence="1"/>
<dbReference type="EMBL" id="BA000021">
    <property type="protein sequence ID" value="BAC24481.1"/>
    <property type="molecule type" value="Genomic_DNA"/>
</dbReference>
<dbReference type="SMR" id="Q8D2L9"/>
<dbReference type="STRING" id="36870.gene:10368835"/>
<dbReference type="KEGG" id="wbr:rnt"/>
<dbReference type="eggNOG" id="COG0847">
    <property type="taxonomic scope" value="Bacteria"/>
</dbReference>
<dbReference type="HOGENOM" id="CLU_082724_0_0_6"/>
<dbReference type="OrthoDB" id="9778264at2"/>
<dbReference type="Proteomes" id="UP000000562">
    <property type="component" value="Chromosome"/>
</dbReference>
<dbReference type="GO" id="GO:0005829">
    <property type="term" value="C:cytosol"/>
    <property type="evidence" value="ECO:0007669"/>
    <property type="project" value="TreeGrafter"/>
</dbReference>
<dbReference type="GO" id="GO:0008408">
    <property type="term" value="F:3'-5' exonuclease activity"/>
    <property type="evidence" value="ECO:0007669"/>
    <property type="project" value="TreeGrafter"/>
</dbReference>
<dbReference type="GO" id="GO:0000287">
    <property type="term" value="F:magnesium ion binding"/>
    <property type="evidence" value="ECO:0007669"/>
    <property type="project" value="UniProtKB-UniRule"/>
</dbReference>
<dbReference type="GO" id="GO:0003676">
    <property type="term" value="F:nucleic acid binding"/>
    <property type="evidence" value="ECO:0007669"/>
    <property type="project" value="InterPro"/>
</dbReference>
<dbReference type="GO" id="GO:0016896">
    <property type="term" value="F:RNA exonuclease activity, producing 5'-phosphomonoesters"/>
    <property type="evidence" value="ECO:0007669"/>
    <property type="project" value="UniProtKB-UniRule"/>
</dbReference>
<dbReference type="GO" id="GO:0045004">
    <property type="term" value="P:DNA replication proofreading"/>
    <property type="evidence" value="ECO:0007669"/>
    <property type="project" value="TreeGrafter"/>
</dbReference>
<dbReference type="GO" id="GO:0008033">
    <property type="term" value="P:tRNA processing"/>
    <property type="evidence" value="ECO:0007669"/>
    <property type="project" value="UniProtKB-KW"/>
</dbReference>
<dbReference type="CDD" id="cd06134">
    <property type="entry name" value="RNaseT"/>
    <property type="match status" value="1"/>
</dbReference>
<dbReference type="FunFam" id="3.30.420.10:FF:000009">
    <property type="entry name" value="Ribonuclease T"/>
    <property type="match status" value="1"/>
</dbReference>
<dbReference type="Gene3D" id="3.30.420.10">
    <property type="entry name" value="Ribonuclease H-like superfamily/Ribonuclease H"/>
    <property type="match status" value="1"/>
</dbReference>
<dbReference type="HAMAP" id="MF_00157">
    <property type="entry name" value="RNase_T"/>
    <property type="match status" value="1"/>
</dbReference>
<dbReference type="InterPro" id="IPR013520">
    <property type="entry name" value="Exonuclease_RNaseT/DNA_pol3"/>
</dbReference>
<dbReference type="InterPro" id="IPR005987">
    <property type="entry name" value="RNase_T"/>
</dbReference>
<dbReference type="InterPro" id="IPR012337">
    <property type="entry name" value="RNaseH-like_sf"/>
</dbReference>
<dbReference type="InterPro" id="IPR036397">
    <property type="entry name" value="RNaseH_sf"/>
</dbReference>
<dbReference type="NCBIfam" id="TIGR01298">
    <property type="entry name" value="RNaseT"/>
    <property type="match status" value="1"/>
</dbReference>
<dbReference type="PANTHER" id="PTHR30231">
    <property type="entry name" value="DNA POLYMERASE III SUBUNIT EPSILON"/>
    <property type="match status" value="1"/>
</dbReference>
<dbReference type="PANTHER" id="PTHR30231:SF2">
    <property type="entry name" value="RIBONUCLEASE T"/>
    <property type="match status" value="1"/>
</dbReference>
<dbReference type="Pfam" id="PF00929">
    <property type="entry name" value="RNase_T"/>
    <property type="match status" value="1"/>
</dbReference>
<dbReference type="SMART" id="SM00479">
    <property type="entry name" value="EXOIII"/>
    <property type="match status" value="1"/>
</dbReference>
<dbReference type="SUPFAM" id="SSF53098">
    <property type="entry name" value="Ribonuclease H-like"/>
    <property type="match status" value="1"/>
</dbReference>
<evidence type="ECO:0000255" key="1">
    <source>
        <dbReference type="HAMAP-Rule" id="MF_00157"/>
    </source>
</evidence>
<comment type="function">
    <text evidence="1">Trims short 3' overhangs of a variety of RNA species, leaving a one or two nucleotide 3' overhang. Responsible for the end-turnover of tRNA: specifically removes the terminal AMP residue from uncharged tRNA (tRNA-C-C-A). Also appears to be involved in tRNA biosynthesis.</text>
</comment>
<comment type="cofactor">
    <cofactor evidence="1">
        <name>Mg(2+)</name>
        <dbReference type="ChEBI" id="CHEBI:18420"/>
    </cofactor>
    <text evidence="1">Binds two Mg(2+) per subunit. The active form of the enzyme binds two Mg(2+) ions in its active site. The first Mg(2+) forms only one salt bridge with the protein.</text>
</comment>
<comment type="subunit">
    <text evidence="1">Homodimer.</text>
</comment>
<comment type="similarity">
    <text evidence="1">Belongs to the RNase T family.</text>
</comment>
<organism>
    <name type="scientific">Wigglesworthia glossinidia brevipalpis</name>
    <dbReference type="NCBI Taxonomy" id="36870"/>
    <lineage>
        <taxon>Bacteria</taxon>
        <taxon>Pseudomonadati</taxon>
        <taxon>Pseudomonadota</taxon>
        <taxon>Gammaproteobacteria</taxon>
        <taxon>Enterobacterales</taxon>
        <taxon>Erwiniaceae</taxon>
        <taxon>Wigglesworthia</taxon>
    </lineage>
</organism>
<keyword id="KW-0269">Exonuclease</keyword>
<keyword id="KW-0378">Hydrolase</keyword>
<keyword id="KW-0460">Magnesium</keyword>
<keyword id="KW-0479">Metal-binding</keyword>
<keyword id="KW-0540">Nuclease</keyword>
<keyword id="KW-1185">Reference proteome</keyword>
<keyword id="KW-0819">tRNA processing</keyword>
<gene>
    <name evidence="1" type="primary">rnt</name>
    <name type="ordered locus">WIGBR3350</name>
</gene>
<protein>
    <recommendedName>
        <fullName evidence="1">Ribonuclease T</fullName>
        <ecNumber evidence="1">3.1.13.-</ecNumber>
    </recommendedName>
    <alternativeName>
        <fullName evidence="1">Exoribonuclease T</fullName>
        <shortName evidence="1">RNase T</shortName>
    </alternativeName>
</protein>
<accession>Q8D2L9</accession>
<feature type="chain" id="PRO_0000208980" description="Ribonuclease T">
    <location>
        <begin position="1"/>
        <end position="215"/>
    </location>
</feature>
<feature type="domain" description="Exonuclease" evidence="1">
    <location>
        <begin position="21"/>
        <end position="195"/>
    </location>
</feature>
<feature type="active site" description="Proton donor/acceptor" evidence="1">
    <location>
        <position position="182"/>
    </location>
</feature>
<feature type="binding site" evidence="1">
    <location>
        <position position="24"/>
    </location>
    <ligand>
        <name>Mg(2+)</name>
        <dbReference type="ChEBI" id="CHEBI:18420"/>
        <label>1</label>
        <note>catalytic</note>
    </ligand>
</feature>
<feature type="binding site" evidence="1">
    <location>
        <position position="24"/>
    </location>
    <ligand>
        <name>Mg(2+)</name>
        <dbReference type="ChEBI" id="CHEBI:18420"/>
        <label>2</label>
        <note>catalytic</note>
    </ligand>
</feature>
<feature type="binding site" evidence="1">
    <location>
        <position position="26"/>
    </location>
    <ligand>
        <name>Mg(2+)</name>
        <dbReference type="ChEBI" id="CHEBI:18420"/>
        <label>2</label>
        <note>catalytic</note>
    </ligand>
</feature>
<feature type="binding site" evidence="1">
    <location>
        <position position="182"/>
    </location>
    <ligand>
        <name>Mg(2+)</name>
        <dbReference type="ChEBI" id="CHEBI:18420"/>
        <label>2</label>
        <note>catalytic</note>
    </ligand>
</feature>
<feature type="binding site" evidence="1">
    <location>
        <position position="187"/>
    </location>
    <ligand>
        <name>Mg(2+)</name>
        <dbReference type="ChEBI" id="CHEBI:18420"/>
        <label>2</label>
        <note>catalytic</note>
    </ligand>
</feature>
<feature type="site" description="Important for substrate binding and specificity" evidence="1">
    <location>
        <position position="30"/>
    </location>
</feature>
<feature type="site" description="Important for substrate binding and specificity" evidence="1">
    <location>
        <position position="78"/>
    </location>
</feature>
<feature type="site" description="Important for substrate binding and specificity" evidence="1">
    <location>
        <position position="125"/>
    </location>
</feature>
<feature type="site" description="Important for substrate binding and specificity" evidence="1">
    <location>
        <position position="147"/>
    </location>
</feature>
<name>RNT_WIGBR</name>
<proteinExistence type="inferred from homology"/>
<sequence>MFQSKNIKNFLKNRFRGFYPVVIDVETAGFDPYRDALLEIAIITLRMDDNGFLRIDNKLHFNIIPTPGLNIKKSALKFNKIDPYNPFRAAINERKAIKEIFNTVRLGIKKQSCSKAVVVAHNAYFDHSFLMSAVDRSKIKYNPFHSFSTFDTATLSGLVLGQTVLSKACIIAGIEFNNNYAHSALYDSKKTAELFCEIVNRWKKMGGWPIPKNRK</sequence>